<gene>
    <name evidence="1" type="primary">mntP</name>
    <name type="ordered locus">BH3770</name>
</gene>
<dbReference type="EMBL" id="BA000004">
    <property type="protein sequence ID" value="BAB07489.1"/>
    <property type="molecule type" value="Genomic_DNA"/>
</dbReference>
<dbReference type="PIR" id="B84121">
    <property type="entry name" value="B84121"/>
</dbReference>
<dbReference type="RefSeq" id="WP_010899895.1">
    <property type="nucleotide sequence ID" value="NC_002570.2"/>
</dbReference>
<dbReference type="STRING" id="272558.gene:10729683"/>
<dbReference type="GeneID" id="87599316"/>
<dbReference type="KEGG" id="bha:BH3770"/>
<dbReference type="eggNOG" id="COG1971">
    <property type="taxonomic scope" value="Bacteria"/>
</dbReference>
<dbReference type="HOGENOM" id="CLU_096410_1_0_9"/>
<dbReference type="OrthoDB" id="1679700at2"/>
<dbReference type="Proteomes" id="UP000001258">
    <property type="component" value="Chromosome"/>
</dbReference>
<dbReference type="GO" id="GO:0005886">
    <property type="term" value="C:plasma membrane"/>
    <property type="evidence" value="ECO:0007669"/>
    <property type="project" value="UniProtKB-SubCell"/>
</dbReference>
<dbReference type="GO" id="GO:0005384">
    <property type="term" value="F:manganese ion transmembrane transporter activity"/>
    <property type="evidence" value="ECO:0007669"/>
    <property type="project" value="UniProtKB-UniRule"/>
</dbReference>
<dbReference type="HAMAP" id="MF_01521">
    <property type="entry name" value="MntP_pump"/>
    <property type="match status" value="1"/>
</dbReference>
<dbReference type="InterPro" id="IPR003810">
    <property type="entry name" value="Mntp/YtaF"/>
</dbReference>
<dbReference type="InterPro" id="IPR022929">
    <property type="entry name" value="Put_MntP"/>
</dbReference>
<dbReference type="PANTHER" id="PTHR35529">
    <property type="entry name" value="MANGANESE EFFLUX PUMP MNTP-RELATED"/>
    <property type="match status" value="1"/>
</dbReference>
<dbReference type="PANTHER" id="PTHR35529:SF1">
    <property type="entry name" value="MANGANESE EFFLUX PUMP MNTP-RELATED"/>
    <property type="match status" value="1"/>
</dbReference>
<dbReference type="Pfam" id="PF02659">
    <property type="entry name" value="Mntp"/>
    <property type="match status" value="1"/>
</dbReference>
<evidence type="ECO:0000255" key="1">
    <source>
        <dbReference type="HAMAP-Rule" id="MF_01521"/>
    </source>
</evidence>
<feature type="chain" id="PRO_0000155633" description="Putative manganese efflux pump MntP">
    <location>
        <begin position="1"/>
        <end position="181"/>
    </location>
</feature>
<feature type="transmembrane region" description="Helical" evidence="1">
    <location>
        <begin position="5"/>
        <end position="25"/>
    </location>
</feature>
<feature type="transmembrane region" description="Helical" evidence="1">
    <location>
        <begin position="36"/>
        <end position="56"/>
    </location>
</feature>
<feature type="transmembrane region" description="Helical" evidence="1">
    <location>
        <begin position="66"/>
        <end position="86"/>
    </location>
</feature>
<feature type="transmembrane region" description="Helical" evidence="1">
    <location>
        <begin position="102"/>
        <end position="122"/>
    </location>
</feature>
<feature type="transmembrane region" description="Helical" evidence="1">
    <location>
        <begin position="130"/>
        <end position="150"/>
    </location>
</feature>
<feature type="transmembrane region" description="Helical" evidence="1">
    <location>
        <begin position="158"/>
        <end position="178"/>
    </location>
</feature>
<proteinExistence type="inferred from homology"/>
<name>MNTP_HALH5</name>
<organism>
    <name type="scientific">Halalkalibacterium halodurans (strain ATCC BAA-125 / DSM 18197 / FERM 7344 / JCM 9153 / C-125)</name>
    <name type="common">Bacillus halodurans</name>
    <dbReference type="NCBI Taxonomy" id="272558"/>
    <lineage>
        <taxon>Bacteria</taxon>
        <taxon>Bacillati</taxon>
        <taxon>Bacillota</taxon>
        <taxon>Bacilli</taxon>
        <taxon>Bacillales</taxon>
        <taxon>Bacillaceae</taxon>
        <taxon>Halalkalibacterium (ex Joshi et al. 2022)</taxon>
    </lineage>
</organism>
<protein>
    <recommendedName>
        <fullName evidence="1">Putative manganese efflux pump MntP</fullName>
    </recommendedName>
</protein>
<keyword id="KW-1003">Cell membrane</keyword>
<keyword id="KW-0406">Ion transport</keyword>
<keyword id="KW-0464">Manganese</keyword>
<keyword id="KW-0472">Membrane</keyword>
<keyword id="KW-1185">Reference proteome</keyword>
<keyword id="KW-0812">Transmembrane</keyword>
<keyword id="KW-1133">Transmembrane helix</keyword>
<keyword id="KW-0813">Transport</keyword>
<comment type="function">
    <text evidence="1">Probably functions as a manganese efflux pump.</text>
</comment>
<comment type="subcellular location">
    <subcellularLocation>
        <location evidence="1">Cell membrane</location>
        <topology evidence="1">Multi-pass membrane protein</topology>
    </subcellularLocation>
</comment>
<comment type="similarity">
    <text evidence="1">Belongs to the MntP (TC 9.B.29) family.</text>
</comment>
<accession>Q9K6F9</accession>
<reference key="1">
    <citation type="journal article" date="2000" name="Nucleic Acids Res.">
        <title>Complete genome sequence of the alkaliphilic bacterium Bacillus halodurans and genomic sequence comparison with Bacillus subtilis.</title>
        <authorList>
            <person name="Takami H."/>
            <person name="Nakasone K."/>
            <person name="Takaki Y."/>
            <person name="Maeno G."/>
            <person name="Sasaki R."/>
            <person name="Masui N."/>
            <person name="Fuji F."/>
            <person name="Hirama C."/>
            <person name="Nakamura Y."/>
            <person name="Ogasawara N."/>
            <person name="Kuhara S."/>
            <person name="Horikoshi K."/>
        </authorList>
    </citation>
    <scope>NUCLEOTIDE SEQUENCE [LARGE SCALE GENOMIC DNA]</scope>
    <source>
        <strain>ATCC BAA-125 / DSM 18197 / FERM 7344 / JCM 9153 / C-125</strain>
    </source>
</reference>
<sequence>MVEELIALLIMASALGMDAFSIALGMGTLGLRFSQMFKVGLTIGVFHVIMPLMGMVAGKLLSAHLGLFANWLGAGLLLWLGLVMIVSPFQEKERTFVDPSGIGLFVFALSVSLDSLSAGLSLGMVGAKMALAVVAMGVMSTVLSWLGLFIGMRFQRYVGPYSELLGGFILCGFGVKLLLPY</sequence>